<keyword id="KW-0963">Cytoplasm</keyword>
<keyword id="KW-0238">DNA-binding</keyword>
<keyword id="KW-1185">Reference proteome</keyword>
<keyword id="KW-0678">Repressor</keyword>
<keyword id="KW-0804">Transcription</keyword>
<keyword id="KW-0805">Transcription regulation</keyword>
<comment type="function">
    <text evidence="2 3 4">Represses ulaG and the ulaABCDEF operon. Two ulaR binding sites have been identified in each promoter. Full activity requires simultaneous interaction of UlaR with both divergent promoters and seems to be dependent on repressor-mediated DNA loop formation, which is helped by the action of integration host factor.</text>
</comment>
<comment type="interaction">
    <interactant intactId="EBI-560926">
        <id>P0A9W0</id>
    </interactant>
    <interactant intactId="EBI-543750">
        <id>P0A6F5</id>
        <label>groEL</label>
    </interactant>
    <organismsDiffer>false</organismsDiffer>
    <experiments>4</experiments>
</comment>
<comment type="interaction">
    <interactant intactId="EBI-560926">
        <id>P0A9W0</id>
    </interactant>
    <interactant intactId="EBI-557388">
        <id>P76594</id>
        <label>patZ</label>
    </interactant>
    <organismsDiffer>false</organismsDiffer>
    <experiments>4</experiments>
</comment>
<comment type="subcellular location">
    <subcellularLocation>
        <location evidence="5">Cytoplasm</location>
    </subcellularLocation>
</comment>
<comment type="disruption phenotype">
    <text evidence="3">Cells lacking this gene show a more rapid utilization of L-ascorbate and are able to grow on L-ascorbate under microaerophilic conditions.</text>
</comment>
<organism>
    <name type="scientific">Escherichia coli (strain K12)</name>
    <dbReference type="NCBI Taxonomy" id="83333"/>
    <lineage>
        <taxon>Bacteria</taxon>
        <taxon>Pseudomonadati</taxon>
        <taxon>Pseudomonadota</taxon>
        <taxon>Gammaproteobacteria</taxon>
        <taxon>Enterobacterales</taxon>
        <taxon>Enterobacteriaceae</taxon>
        <taxon>Escherichia</taxon>
    </lineage>
</organism>
<proteinExistence type="evidence at protein level"/>
<reference key="1">
    <citation type="journal article" date="1995" name="Nucleic Acids Res.">
        <title>Analysis of the Escherichia coli genome VI: DNA sequence of the region from 92.8 through 100 minutes.</title>
        <authorList>
            <person name="Burland V.D."/>
            <person name="Plunkett G. III"/>
            <person name="Sofia H.J."/>
            <person name="Daniels D.L."/>
            <person name="Blattner F.R."/>
        </authorList>
    </citation>
    <scope>NUCLEOTIDE SEQUENCE [LARGE SCALE GENOMIC DNA]</scope>
    <source>
        <strain>K12 / MG1655 / ATCC 47076</strain>
    </source>
</reference>
<reference key="2">
    <citation type="journal article" date="1997" name="Science">
        <title>The complete genome sequence of Escherichia coli K-12.</title>
        <authorList>
            <person name="Blattner F.R."/>
            <person name="Plunkett G. III"/>
            <person name="Bloch C.A."/>
            <person name="Perna N.T."/>
            <person name="Burland V."/>
            <person name="Riley M."/>
            <person name="Collado-Vides J."/>
            <person name="Glasner J.D."/>
            <person name="Rode C.K."/>
            <person name="Mayhew G.F."/>
            <person name="Gregor J."/>
            <person name="Davis N.W."/>
            <person name="Kirkpatrick H.A."/>
            <person name="Goeden M.A."/>
            <person name="Rose D.J."/>
            <person name="Mau B."/>
            <person name="Shao Y."/>
        </authorList>
    </citation>
    <scope>NUCLEOTIDE SEQUENCE [LARGE SCALE GENOMIC DNA]</scope>
    <source>
        <strain>K12 / MG1655 / ATCC 47076</strain>
    </source>
</reference>
<reference key="3">
    <citation type="journal article" date="2006" name="Mol. Syst. Biol.">
        <title>Highly accurate genome sequences of Escherichia coli K-12 strains MG1655 and W3110.</title>
        <authorList>
            <person name="Hayashi K."/>
            <person name="Morooka N."/>
            <person name="Yamamoto Y."/>
            <person name="Fujita K."/>
            <person name="Isono K."/>
            <person name="Choi S."/>
            <person name="Ohtsubo E."/>
            <person name="Baba T."/>
            <person name="Wanner B.L."/>
            <person name="Mori H."/>
            <person name="Horiuchi T."/>
        </authorList>
    </citation>
    <scope>NUCLEOTIDE SEQUENCE [LARGE SCALE GENOMIC DNA]</scope>
    <source>
        <strain>K12 / W3110 / ATCC 27325 / DSM 5911</strain>
    </source>
</reference>
<reference key="4">
    <citation type="journal article" date="2003" name="J. Mol. Evol.">
        <title>Rates of DNA sequence evolution in experimental populations of Escherichia coli during 20,000 generations.</title>
        <authorList>
            <person name="Lenski R.E."/>
            <person name="Winkworth C.L."/>
            <person name="Riley M.A."/>
        </authorList>
    </citation>
    <scope>NUCLEOTIDE SEQUENCE [GENOMIC DNA] OF 30-202</scope>
    <source>
        <strain>B / Bc251</strain>
    </source>
</reference>
<reference key="5">
    <citation type="journal article" date="2002" name="J. Bacteriol.">
        <title>The gene yjfQ encodes the repressor of the yjfR-X regulon (ula), which is involved in L-ascorbate metabolism in Escherichia coli.</title>
        <authorList>
            <person name="Campos E."/>
            <person name="Aguilar J."/>
            <person name="Baldoma L."/>
            <person name="Badia J."/>
        </authorList>
    </citation>
    <scope>FUNCTION</scope>
    <scope>DISRUPTION PHENOTYPE</scope>
</reference>
<reference key="6">
    <citation type="journal article" date="2003" name="J. Bacteriol.">
        <title>The ascorbate transporter of Escherichia coli.</title>
        <authorList>
            <person name="Zhang Z."/>
            <person name="Aboulwafa M."/>
            <person name="Smith M.H."/>
            <person name="Saier M.H. Jr."/>
        </authorList>
    </citation>
    <scope>FUNCTION</scope>
</reference>
<reference key="7">
    <citation type="journal article" date="2004" name="J. Bacteriol.">
        <title>Regulation of expression of the divergent ulaG and ulaABCDEF operons involved in L-ascorbate dissimilation in Escherichia coli.</title>
        <authorList>
            <person name="Campos E."/>
            <person name="Baldoma L."/>
            <person name="Aguilar J."/>
            <person name="Badia J."/>
        </authorList>
    </citation>
    <scope>FUNCTION</scope>
</reference>
<name>ULAR_ECOLI</name>
<protein>
    <recommendedName>
        <fullName>HTH-type transcriptional regulator UlaR</fullName>
    </recommendedName>
</protein>
<dbReference type="EMBL" id="U14003">
    <property type="protein sequence ID" value="AAA97087.1"/>
    <property type="molecule type" value="Genomic_DNA"/>
</dbReference>
<dbReference type="EMBL" id="U00096">
    <property type="protein sequence ID" value="AAC77148.1"/>
    <property type="molecule type" value="Genomic_DNA"/>
</dbReference>
<dbReference type="EMBL" id="AP009048">
    <property type="protein sequence ID" value="BAE78192.1"/>
    <property type="molecule type" value="Genomic_DNA"/>
</dbReference>
<dbReference type="EMBL" id="AY625132">
    <property type="protein sequence ID" value="AAT42486.1"/>
    <property type="molecule type" value="Genomic_DNA"/>
</dbReference>
<dbReference type="PIR" id="S56416">
    <property type="entry name" value="S56416"/>
</dbReference>
<dbReference type="RefSeq" id="NP_418612.1">
    <property type="nucleotide sequence ID" value="NC_000913.3"/>
</dbReference>
<dbReference type="RefSeq" id="WP_000133631.1">
    <property type="nucleotide sequence ID" value="NZ_STEB01000013.1"/>
</dbReference>
<dbReference type="SMR" id="P0A9W0"/>
<dbReference type="BioGRID" id="4262711">
    <property type="interactions" value="154"/>
</dbReference>
<dbReference type="BioGRID" id="852998">
    <property type="interactions" value="1"/>
</dbReference>
<dbReference type="DIP" id="DIP-47874N"/>
<dbReference type="FunCoup" id="P0A9W0">
    <property type="interactions" value="68"/>
</dbReference>
<dbReference type="IntAct" id="P0A9W0">
    <property type="interactions" value="41"/>
</dbReference>
<dbReference type="STRING" id="511145.b4191"/>
<dbReference type="jPOST" id="P0A9W0"/>
<dbReference type="PaxDb" id="511145-b4191"/>
<dbReference type="EnsemblBacteria" id="AAC77148">
    <property type="protein sequence ID" value="AAC77148"/>
    <property type="gene ID" value="b4191"/>
</dbReference>
<dbReference type="GeneID" id="75202425"/>
<dbReference type="GeneID" id="948706"/>
<dbReference type="KEGG" id="ecj:JW4149"/>
<dbReference type="KEGG" id="eco:b4191"/>
<dbReference type="KEGG" id="ecoc:C3026_22640"/>
<dbReference type="PATRIC" id="fig|1411691.4.peg.2510"/>
<dbReference type="EchoBASE" id="EB2384"/>
<dbReference type="eggNOG" id="COG1349">
    <property type="taxonomic scope" value="Bacteria"/>
</dbReference>
<dbReference type="HOGENOM" id="CLU_060699_3_2_6"/>
<dbReference type="InParanoid" id="P0A9W0"/>
<dbReference type="OMA" id="FDNDVTR"/>
<dbReference type="OrthoDB" id="9816363at2"/>
<dbReference type="PhylomeDB" id="P0A9W0"/>
<dbReference type="BioCyc" id="EcoCyc:G7854-MONOMER"/>
<dbReference type="PRO" id="PR:P0A9W0"/>
<dbReference type="Proteomes" id="UP000000625">
    <property type="component" value="Chromosome"/>
</dbReference>
<dbReference type="GO" id="GO:0005737">
    <property type="term" value="C:cytoplasm"/>
    <property type="evidence" value="ECO:0007669"/>
    <property type="project" value="UniProtKB-SubCell"/>
</dbReference>
<dbReference type="GO" id="GO:0000987">
    <property type="term" value="F:cis-regulatory region sequence-specific DNA binding"/>
    <property type="evidence" value="ECO:0000318"/>
    <property type="project" value="GO_Central"/>
</dbReference>
<dbReference type="GO" id="GO:0031418">
    <property type="term" value="F:L-ascorbic acid binding"/>
    <property type="evidence" value="ECO:0000315"/>
    <property type="project" value="EcoCyc"/>
</dbReference>
<dbReference type="GO" id="GO:0098531">
    <property type="term" value="F:ligand-modulated transcription factor activity"/>
    <property type="evidence" value="ECO:0000318"/>
    <property type="project" value="GO_Central"/>
</dbReference>
<dbReference type="GO" id="GO:0006351">
    <property type="term" value="P:DNA-templated transcription"/>
    <property type="evidence" value="ECO:0000270"/>
    <property type="project" value="EcoCyc"/>
</dbReference>
<dbReference type="GO" id="GO:0045892">
    <property type="term" value="P:negative regulation of DNA-templated transcription"/>
    <property type="evidence" value="ECO:0007669"/>
    <property type="project" value="UniProtKB-UniRule"/>
</dbReference>
<dbReference type="GO" id="GO:0006355">
    <property type="term" value="P:regulation of DNA-templated transcription"/>
    <property type="evidence" value="ECO:0000318"/>
    <property type="project" value="GO_Central"/>
</dbReference>
<dbReference type="FunFam" id="1.10.10.10:FF:000160">
    <property type="entry name" value="HTH-type transcriptional regulator UlaR"/>
    <property type="match status" value="1"/>
</dbReference>
<dbReference type="Gene3D" id="1.10.10.10">
    <property type="entry name" value="Winged helix-like DNA-binding domain superfamily/Winged helix DNA-binding domain"/>
    <property type="match status" value="1"/>
</dbReference>
<dbReference type="HAMAP" id="MF_01563">
    <property type="entry name" value="HTH_type_UlaR"/>
    <property type="match status" value="1"/>
</dbReference>
<dbReference type="InterPro" id="IPR050313">
    <property type="entry name" value="Carb_Metab_HTH_regulators"/>
</dbReference>
<dbReference type="InterPro" id="IPR014036">
    <property type="entry name" value="DeoR-like_C"/>
</dbReference>
<dbReference type="InterPro" id="IPR001034">
    <property type="entry name" value="DeoR_HTH"/>
</dbReference>
<dbReference type="InterPro" id="IPR037171">
    <property type="entry name" value="NagB/RpiA_transferase-like"/>
</dbReference>
<dbReference type="InterPro" id="IPR018356">
    <property type="entry name" value="Tscrpt_reg_HTH_DeoR_CS"/>
</dbReference>
<dbReference type="InterPro" id="IPR023711">
    <property type="entry name" value="Tscrpt_reg_HTH_UlaR"/>
</dbReference>
<dbReference type="InterPro" id="IPR036388">
    <property type="entry name" value="WH-like_DNA-bd_sf"/>
</dbReference>
<dbReference type="InterPro" id="IPR036390">
    <property type="entry name" value="WH_DNA-bd_sf"/>
</dbReference>
<dbReference type="NCBIfam" id="NF010034">
    <property type="entry name" value="PRK13509.1"/>
    <property type="match status" value="1"/>
</dbReference>
<dbReference type="PANTHER" id="PTHR30363">
    <property type="entry name" value="HTH-TYPE TRANSCRIPTIONAL REGULATOR SRLR-RELATED"/>
    <property type="match status" value="1"/>
</dbReference>
<dbReference type="PANTHER" id="PTHR30363:SF55">
    <property type="entry name" value="HTH-TYPE TRANSCRIPTIONAL REGULATOR ULAR"/>
    <property type="match status" value="1"/>
</dbReference>
<dbReference type="Pfam" id="PF00455">
    <property type="entry name" value="DeoRC"/>
    <property type="match status" value="1"/>
</dbReference>
<dbReference type="Pfam" id="PF08220">
    <property type="entry name" value="HTH_DeoR"/>
    <property type="match status" value="1"/>
</dbReference>
<dbReference type="PRINTS" id="PR00037">
    <property type="entry name" value="HTHLACR"/>
</dbReference>
<dbReference type="SMART" id="SM01134">
    <property type="entry name" value="DeoRC"/>
    <property type="match status" value="1"/>
</dbReference>
<dbReference type="SMART" id="SM00420">
    <property type="entry name" value="HTH_DEOR"/>
    <property type="match status" value="1"/>
</dbReference>
<dbReference type="SUPFAM" id="SSF100950">
    <property type="entry name" value="NagB/RpiA/CoA transferase-like"/>
    <property type="match status" value="1"/>
</dbReference>
<dbReference type="SUPFAM" id="SSF46785">
    <property type="entry name" value="Winged helix' DNA-binding domain"/>
    <property type="match status" value="1"/>
</dbReference>
<dbReference type="PROSITE" id="PS00894">
    <property type="entry name" value="HTH_DEOR_1"/>
    <property type="match status" value="1"/>
</dbReference>
<dbReference type="PROSITE" id="PS51000">
    <property type="entry name" value="HTH_DEOR_2"/>
    <property type="match status" value="1"/>
</dbReference>
<gene>
    <name type="primary">ulaR</name>
    <name type="synonym">yjfQ</name>
    <name type="ordered locus">b4191</name>
    <name type="ordered locus">JW4149</name>
</gene>
<feature type="chain" id="PRO_0000050277" description="HTH-type transcriptional regulator UlaR">
    <location>
        <begin position="1"/>
        <end position="251"/>
    </location>
</feature>
<feature type="domain" description="HTH deoR-type">
    <location>
        <begin position="3"/>
        <end position="58"/>
    </location>
</feature>
<feature type="DNA-binding region" description="H-T-H motif" evidence="1">
    <location>
        <begin position="20"/>
        <end position="39"/>
    </location>
</feature>
<accession>P0A9W0</accession>
<accession>P39299</accession>
<accession>Q2M6B4</accession>
<accession>Q6IU17</accession>
<sequence>MTEAQRHQILLEMLAQLGFVTVEKVVERLGISPATARRDINKLDESGKLKKVRNGAEAITQQRPRWTPMNLHQAQNHDEKVRIAKAASQLVNPGESVVINCGSTAFLLGREMCGKPVQIITNYLPLANYLIDQEHDSVIIMGGQYNKSQSITLSPQGSENSLYAGHWMFTSGKGLTAEGLYKTDMLTAMAEQKMLSVVGKLVVLVDSSKIGERAGMLFSRADQIDMLITGKNANPEILQQLEAQGVSILRV</sequence>
<evidence type="ECO:0000250" key="1"/>
<evidence type="ECO:0000269" key="2">
    <source>
    </source>
</evidence>
<evidence type="ECO:0000269" key="3">
    <source>
    </source>
</evidence>
<evidence type="ECO:0000269" key="4">
    <source>
    </source>
</evidence>
<evidence type="ECO:0000305" key="5"/>